<gene>
    <name evidence="1" type="primary">ruvA</name>
    <name type="ordered locus">BBR47_18650</name>
</gene>
<organism>
    <name type="scientific">Brevibacillus brevis (strain 47 / JCM 6285 / NBRC 100599)</name>
    <dbReference type="NCBI Taxonomy" id="358681"/>
    <lineage>
        <taxon>Bacteria</taxon>
        <taxon>Bacillati</taxon>
        <taxon>Bacillota</taxon>
        <taxon>Bacilli</taxon>
        <taxon>Bacillales</taxon>
        <taxon>Paenibacillaceae</taxon>
        <taxon>Brevibacillus</taxon>
    </lineage>
</organism>
<reference key="1">
    <citation type="submission" date="2005-03" db="EMBL/GenBank/DDBJ databases">
        <title>Brevibacillus brevis strain 47, complete genome.</title>
        <authorList>
            <person name="Hosoyama A."/>
            <person name="Yamada R."/>
            <person name="Hongo Y."/>
            <person name="Terui Y."/>
            <person name="Ankai A."/>
            <person name="Masuyama W."/>
            <person name="Sekiguchi M."/>
            <person name="Takeda T."/>
            <person name="Asano K."/>
            <person name="Ohji S."/>
            <person name="Ichikawa N."/>
            <person name="Narita S."/>
            <person name="Aoki N."/>
            <person name="Miura H."/>
            <person name="Matsushita S."/>
            <person name="Sekigawa T."/>
            <person name="Yamagata H."/>
            <person name="Yoshikawa H."/>
            <person name="Udaka S."/>
            <person name="Tanikawa S."/>
            <person name="Fujita N."/>
        </authorList>
    </citation>
    <scope>NUCLEOTIDE SEQUENCE [LARGE SCALE GENOMIC DNA]</scope>
    <source>
        <strain>47 / JCM 6285 / NBRC 100599</strain>
    </source>
</reference>
<protein>
    <recommendedName>
        <fullName evidence="1">Holliday junction branch migration complex subunit RuvA</fullName>
    </recommendedName>
</protein>
<feature type="chain" id="PRO_1000195123" description="Holliday junction branch migration complex subunit RuvA">
    <location>
        <begin position="1"/>
        <end position="205"/>
    </location>
</feature>
<feature type="region of interest" description="Domain I" evidence="1">
    <location>
        <begin position="1"/>
        <end position="63"/>
    </location>
</feature>
<feature type="region of interest" description="Domain II" evidence="1">
    <location>
        <begin position="64"/>
        <end position="142"/>
    </location>
</feature>
<feature type="region of interest" description="Flexible linker" evidence="1">
    <location>
        <begin position="143"/>
        <end position="153"/>
    </location>
</feature>
<feature type="region of interest" description="Domain III" evidence="1">
    <location>
        <begin position="153"/>
        <end position="205"/>
    </location>
</feature>
<dbReference type="EMBL" id="AP008955">
    <property type="protein sequence ID" value="BAH42842.1"/>
    <property type="molecule type" value="Genomic_DNA"/>
</dbReference>
<dbReference type="RefSeq" id="WP_012685581.1">
    <property type="nucleotide sequence ID" value="NC_012491.1"/>
</dbReference>
<dbReference type="SMR" id="C0ZAN3"/>
<dbReference type="STRING" id="358681.BBR47_18650"/>
<dbReference type="GeneID" id="95749381"/>
<dbReference type="KEGG" id="bbe:BBR47_18650"/>
<dbReference type="eggNOG" id="COG0632">
    <property type="taxonomic scope" value="Bacteria"/>
</dbReference>
<dbReference type="HOGENOM" id="CLU_087936_1_0_9"/>
<dbReference type="Proteomes" id="UP000001877">
    <property type="component" value="Chromosome"/>
</dbReference>
<dbReference type="GO" id="GO:0005737">
    <property type="term" value="C:cytoplasm"/>
    <property type="evidence" value="ECO:0007669"/>
    <property type="project" value="UniProtKB-SubCell"/>
</dbReference>
<dbReference type="GO" id="GO:0009379">
    <property type="term" value="C:Holliday junction helicase complex"/>
    <property type="evidence" value="ECO:0007669"/>
    <property type="project" value="InterPro"/>
</dbReference>
<dbReference type="GO" id="GO:0048476">
    <property type="term" value="C:Holliday junction resolvase complex"/>
    <property type="evidence" value="ECO:0007669"/>
    <property type="project" value="UniProtKB-UniRule"/>
</dbReference>
<dbReference type="GO" id="GO:0005524">
    <property type="term" value="F:ATP binding"/>
    <property type="evidence" value="ECO:0007669"/>
    <property type="project" value="InterPro"/>
</dbReference>
<dbReference type="GO" id="GO:0000400">
    <property type="term" value="F:four-way junction DNA binding"/>
    <property type="evidence" value="ECO:0007669"/>
    <property type="project" value="UniProtKB-UniRule"/>
</dbReference>
<dbReference type="GO" id="GO:0009378">
    <property type="term" value="F:four-way junction helicase activity"/>
    <property type="evidence" value="ECO:0007669"/>
    <property type="project" value="InterPro"/>
</dbReference>
<dbReference type="GO" id="GO:0006310">
    <property type="term" value="P:DNA recombination"/>
    <property type="evidence" value="ECO:0007669"/>
    <property type="project" value="UniProtKB-UniRule"/>
</dbReference>
<dbReference type="GO" id="GO:0006281">
    <property type="term" value="P:DNA repair"/>
    <property type="evidence" value="ECO:0007669"/>
    <property type="project" value="UniProtKB-UniRule"/>
</dbReference>
<dbReference type="CDD" id="cd14332">
    <property type="entry name" value="UBA_RuvA_C"/>
    <property type="match status" value="1"/>
</dbReference>
<dbReference type="Gene3D" id="1.10.150.20">
    <property type="entry name" value="5' to 3' exonuclease, C-terminal subdomain"/>
    <property type="match status" value="1"/>
</dbReference>
<dbReference type="Gene3D" id="1.10.8.10">
    <property type="entry name" value="DNA helicase RuvA subunit, C-terminal domain"/>
    <property type="match status" value="1"/>
</dbReference>
<dbReference type="Gene3D" id="2.40.50.140">
    <property type="entry name" value="Nucleic acid-binding proteins"/>
    <property type="match status" value="1"/>
</dbReference>
<dbReference type="HAMAP" id="MF_00031">
    <property type="entry name" value="DNA_HJ_migration_RuvA"/>
    <property type="match status" value="1"/>
</dbReference>
<dbReference type="InterPro" id="IPR013849">
    <property type="entry name" value="DNA_helicase_Holl-junc_RuvA_I"/>
</dbReference>
<dbReference type="InterPro" id="IPR003583">
    <property type="entry name" value="Hlx-hairpin-Hlx_DNA-bd_motif"/>
</dbReference>
<dbReference type="InterPro" id="IPR012340">
    <property type="entry name" value="NA-bd_OB-fold"/>
</dbReference>
<dbReference type="InterPro" id="IPR000085">
    <property type="entry name" value="RuvA"/>
</dbReference>
<dbReference type="InterPro" id="IPR010994">
    <property type="entry name" value="RuvA_2-like"/>
</dbReference>
<dbReference type="InterPro" id="IPR011114">
    <property type="entry name" value="RuvA_C"/>
</dbReference>
<dbReference type="InterPro" id="IPR036267">
    <property type="entry name" value="RuvA_C_sf"/>
</dbReference>
<dbReference type="NCBIfam" id="TIGR00084">
    <property type="entry name" value="ruvA"/>
    <property type="match status" value="1"/>
</dbReference>
<dbReference type="Pfam" id="PF14520">
    <property type="entry name" value="HHH_5"/>
    <property type="match status" value="1"/>
</dbReference>
<dbReference type="Pfam" id="PF07499">
    <property type="entry name" value="RuvA_C"/>
    <property type="match status" value="1"/>
</dbReference>
<dbReference type="Pfam" id="PF01330">
    <property type="entry name" value="RuvA_N"/>
    <property type="match status" value="1"/>
</dbReference>
<dbReference type="SMART" id="SM00278">
    <property type="entry name" value="HhH1"/>
    <property type="match status" value="2"/>
</dbReference>
<dbReference type="SUPFAM" id="SSF46929">
    <property type="entry name" value="DNA helicase RuvA subunit, C-terminal domain"/>
    <property type="match status" value="1"/>
</dbReference>
<dbReference type="SUPFAM" id="SSF50249">
    <property type="entry name" value="Nucleic acid-binding proteins"/>
    <property type="match status" value="1"/>
</dbReference>
<dbReference type="SUPFAM" id="SSF47781">
    <property type="entry name" value="RuvA domain 2-like"/>
    <property type="match status" value="1"/>
</dbReference>
<accession>C0ZAN3</accession>
<keyword id="KW-0963">Cytoplasm</keyword>
<keyword id="KW-0227">DNA damage</keyword>
<keyword id="KW-0233">DNA recombination</keyword>
<keyword id="KW-0234">DNA repair</keyword>
<keyword id="KW-0238">DNA-binding</keyword>
<keyword id="KW-1185">Reference proteome</keyword>
<name>RUVA_BREBN</name>
<comment type="function">
    <text evidence="1">The RuvA-RuvB-RuvC complex processes Holliday junction (HJ) DNA during genetic recombination and DNA repair, while the RuvA-RuvB complex plays an important role in the rescue of blocked DNA replication forks via replication fork reversal (RFR). RuvA specifically binds to HJ cruciform DNA, conferring on it an open structure. The RuvB hexamer acts as an ATP-dependent pump, pulling dsDNA into and through the RuvAB complex. HJ branch migration allows RuvC to scan DNA until it finds its consensus sequence, where it cleaves and resolves the cruciform DNA.</text>
</comment>
<comment type="subunit">
    <text evidence="1">Homotetramer. Forms an RuvA(8)-RuvB(12)-Holliday junction (HJ) complex. HJ DNA is sandwiched between 2 RuvA tetramers; dsDNA enters through RuvA and exits via RuvB. An RuvB hexamer assembles on each DNA strand where it exits the tetramer. Each RuvB hexamer is contacted by two RuvA subunits (via domain III) on 2 adjacent RuvB subunits; this complex drives branch migration. In the full resolvosome a probable DNA-RuvA(4)-RuvB(12)-RuvC(2) complex forms which resolves the HJ.</text>
</comment>
<comment type="subcellular location">
    <subcellularLocation>
        <location evidence="1">Cytoplasm</location>
    </subcellularLocation>
</comment>
<comment type="domain">
    <text evidence="1">Has three domains with a flexible linker between the domains II and III and assumes an 'L' shape. Domain III is highly mobile and contacts RuvB.</text>
</comment>
<comment type="similarity">
    <text evidence="1">Belongs to the RuvA family.</text>
</comment>
<evidence type="ECO:0000255" key="1">
    <source>
        <dbReference type="HAMAP-Rule" id="MF_00031"/>
    </source>
</evidence>
<proteinExistence type="inferred from homology"/>
<sequence>MIDFVEGTLSYLDSEYIVIETGGIGYRLFCPNPYQFVRYEGNKTKLFTHHHVREDAILLYGFATRDERDLFRKLLDVSGIGPKGGLAILAAATPEQLVMAVQQENVTYLTKFPGIGKKTAQRIILDLKDKLVGYTPSAILTVAAGDLTAGEQAVSALNEALDALTALGYSDGELQKIRNTLSEKSKEGDGVEKLIKQGLALLMRG</sequence>